<evidence type="ECO:0000255" key="1">
    <source>
        <dbReference type="HAMAP-Rule" id="MF_00303"/>
    </source>
</evidence>
<dbReference type="EC" id="5.2.1.8" evidence="1"/>
<dbReference type="EMBL" id="CP000394">
    <property type="protein sequence ID" value="ABI62207.1"/>
    <property type="molecule type" value="Genomic_DNA"/>
</dbReference>
<dbReference type="RefSeq" id="WP_011632016.1">
    <property type="nucleotide sequence ID" value="NC_008343.2"/>
</dbReference>
<dbReference type="SMR" id="Q0BSJ5"/>
<dbReference type="STRING" id="391165.GbCGDNIH1_1309"/>
<dbReference type="KEGG" id="gbe:GbCGDNIH1_1309"/>
<dbReference type="eggNOG" id="COG0544">
    <property type="taxonomic scope" value="Bacteria"/>
</dbReference>
<dbReference type="HOGENOM" id="CLU_033058_2_2_5"/>
<dbReference type="OrthoDB" id="9767721at2"/>
<dbReference type="Proteomes" id="UP000001963">
    <property type="component" value="Chromosome"/>
</dbReference>
<dbReference type="GO" id="GO:0005737">
    <property type="term" value="C:cytoplasm"/>
    <property type="evidence" value="ECO:0007669"/>
    <property type="project" value="UniProtKB-SubCell"/>
</dbReference>
<dbReference type="GO" id="GO:0003755">
    <property type="term" value="F:peptidyl-prolyl cis-trans isomerase activity"/>
    <property type="evidence" value="ECO:0007669"/>
    <property type="project" value="UniProtKB-UniRule"/>
</dbReference>
<dbReference type="GO" id="GO:0044183">
    <property type="term" value="F:protein folding chaperone"/>
    <property type="evidence" value="ECO:0007669"/>
    <property type="project" value="TreeGrafter"/>
</dbReference>
<dbReference type="GO" id="GO:0043022">
    <property type="term" value="F:ribosome binding"/>
    <property type="evidence" value="ECO:0007669"/>
    <property type="project" value="TreeGrafter"/>
</dbReference>
<dbReference type="GO" id="GO:0051083">
    <property type="term" value="P:'de novo' cotranslational protein folding"/>
    <property type="evidence" value="ECO:0007669"/>
    <property type="project" value="TreeGrafter"/>
</dbReference>
<dbReference type="GO" id="GO:0051301">
    <property type="term" value="P:cell division"/>
    <property type="evidence" value="ECO:0007669"/>
    <property type="project" value="UniProtKB-KW"/>
</dbReference>
<dbReference type="GO" id="GO:0061077">
    <property type="term" value="P:chaperone-mediated protein folding"/>
    <property type="evidence" value="ECO:0007669"/>
    <property type="project" value="TreeGrafter"/>
</dbReference>
<dbReference type="GO" id="GO:0015031">
    <property type="term" value="P:protein transport"/>
    <property type="evidence" value="ECO:0007669"/>
    <property type="project" value="UniProtKB-UniRule"/>
</dbReference>
<dbReference type="GO" id="GO:0043335">
    <property type="term" value="P:protein unfolding"/>
    <property type="evidence" value="ECO:0007669"/>
    <property type="project" value="TreeGrafter"/>
</dbReference>
<dbReference type="FunFam" id="3.10.50.40:FF:000001">
    <property type="entry name" value="Trigger factor"/>
    <property type="match status" value="1"/>
</dbReference>
<dbReference type="Gene3D" id="3.10.50.40">
    <property type="match status" value="1"/>
</dbReference>
<dbReference type="Gene3D" id="3.30.70.1050">
    <property type="entry name" value="Trigger factor ribosome-binding domain"/>
    <property type="match status" value="1"/>
</dbReference>
<dbReference type="Gene3D" id="1.10.3120.10">
    <property type="entry name" value="Trigger factor, C-terminal domain"/>
    <property type="match status" value="1"/>
</dbReference>
<dbReference type="HAMAP" id="MF_00303">
    <property type="entry name" value="Trigger_factor_Tig"/>
    <property type="match status" value="1"/>
</dbReference>
<dbReference type="InterPro" id="IPR046357">
    <property type="entry name" value="PPIase_dom_sf"/>
</dbReference>
<dbReference type="InterPro" id="IPR001179">
    <property type="entry name" value="PPIase_FKBP_dom"/>
</dbReference>
<dbReference type="InterPro" id="IPR005215">
    <property type="entry name" value="Trig_fac"/>
</dbReference>
<dbReference type="InterPro" id="IPR008880">
    <property type="entry name" value="Trigger_fac_C"/>
</dbReference>
<dbReference type="InterPro" id="IPR037041">
    <property type="entry name" value="Trigger_fac_C_sf"/>
</dbReference>
<dbReference type="InterPro" id="IPR008881">
    <property type="entry name" value="Trigger_fac_ribosome-bd_bac"/>
</dbReference>
<dbReference type="InterPro" id="IPR036611">
    <property type="entry name" value="Trigger_fac_ribosome-bd_sf"/>
</dbReference>
<dbReference type="InterPro" id="IPR027304">
    <property type="entry name" value="Trigger_fact/SurA_dom_sf"/>
</dbReference>
<dbReference type="NCBIfam" id="TIGR00115">
    <property type="entry name" value="tig"/>
    <property type="match status" value="1"/>
</dbReference>
<dbReference type="PANTHER" id="PTHR30560">
    <property type="entry name" value="TRIGGER FACTOR CHAPERONE AND PEPTIDYL-PROLYL CIS/TRANS ISOMERASE"/>
    <property type="match status" value="1"/>
</dbReference>
<dbReference type="PANTHER" id="PTHR30560:SF3">
    <property type="entry name" value="TRIGGER FACTOR-LIKE PROTEIN TIG, CHLOROPLASTIC"/>
    <property type="match status" value="1"/>
</dbReference>
<dbReference type="Pfam" id="PF00254">
    <property type="entry name" value="FKBP_C"/>
    <property type="match status" value="1"/>
</dbReference>
<dbReference type="Pfam" id="PF05698">
    <property type="entry name" value="Trigger_C"/>
    <property type="match status" value="1"/>
</dbReference>
<dbReference type="Pfam" id="PF05697">
    <property type="entry name" value="Trigger_N"/>
    <property type="match status" value="1"/>
</dbReference>
<dbReference type="PIRSF" id="PIRSF003095">
    <property type="entry name" value="Trigger_factor"/>
    <property type="match status" value="1"/>
</dbReference>
<dbReference type="SUPFAM" id="SSF54534">
    <property type="entry name" value="FKBP-like"/>
    <property type="match status" value="1"/>
</dbReference>
<dbReference type="SUPFAM" id="SSF109998">
    <property type="entry name" value="Triger factor/SurA peptide-binding domain-like"/>
    <property type="match status" value="1"/>
</dbReference>
<dbReference type="SUPFAM" id="SSF102735">
    <property type="entry name" value="Trigger factor ribosome-binding domain"/>
    <property type="match status" value="1"/>
</dbReference>
<dbReference type="PROSITE" id="PS50059">
    <property type="entry name" value="FKBP_PPIASE"/>
    <property type="match status" value="1"/>
</dbReference>
<protein>
    <recommendedName>
        <fullName evidence="1">Trigger factor</fullName>
        <shortName evidence="1">TF</shortName>
        <ecNumber evidence="1">5.2.1.8</ecNumber>
    </recommendedName>
    <alternativeName>
        <fullName evidence="1">PPIase</fullName>
    </alternativeName>
</protein>
<accession>Q0BSJ5</accession>
<keyword id="KW-0131">Cell cycle</keyword>
<keyword id="KW-0132">Cell division</keyword>
<keyword id="KW-0143">Chaperone</keyword>
<keyword id="KW-0963">Cytoplasm</keyword>
<keyword id="KW-0413">Isomerase</keyword>
<keyword id="KW-1185">Reference proteome</keyword>
<keyword id="KW-0697">Rotamase</keyword>
<feature type="chain" id="PRO_1000022684" description="Trigger factor">
    <location>
        <begin position="1"/>
        <end position="444"/>
    </location>
</feature>
<feature type="domain" description="PPIase FKBP-type" evidence="1">
    <location>
        <begin position="163"/>
        <end position="248"/>
    </location>
</feature>
<reference key="1">
    <citation type="journal article" date="2007" name="J. Bacteriol.">
        <title>Genome sequence analysis of the emerging human pathogenic acetic acid bacterium Granulibacter bethesdensis.</title>
        <authorList>
            <person name="Greenberg D.E."/>
            <person name="Porcella S.F."/>
            <person name="Zelazny A.M."/>
            <person name="Virtaneva K."/>
            <person name="Sturdevant D.E."/>
            <person name="Kupko J.J. III"/>
            <person name="Barbian K.D."/>
            <person name="Babar A."/>
            <person name="Dorward D.W."/>
            <person name="Holland S.M."/>
        </authorList>
    </citation>
    <scope>NUCLEOTIDE SEQUENCE [LARGE SCALE GENOMIC DNA]</scope>
    <source>
        <strain>ATCC BAA-1260 / CGDNIH1</strain>
    </source>
</reference>
<gene>
    <name evidence="1" type="primary">tig</name>
    <name type="ordered locus">GbCGDNIH1_1309</name>
</gene>
<proteinExistence type="inferred from homology"/>
<sequence length="444" mass="49459">MQVTETLSEGLKRGFTVQVPATDIEERRTRRLAELAKTLKLPGFRPGKVPMTLVRQRYGRSVETEVLEETVNEATQTMVSERGLRPALQPKVELVRVDLDQDVEFKVELELLPDITLPDLGSVSLTRLKAEPSAEAVDKALEEIAQRQRNLEPVEEVRPAQKGDFLTVDFVGKTDGVAFQGGTGTDMDVEIAGTGFIPGFSEQMEGLSVGETRVIDVTFPEEYGVPELAGKPAQFEITAKALKKAVAPVIDDAFATKLGLDSLEKLREIVTQQIQNEYDQVSRLRVKRALLDALADQAAFEVPPTLVENEFNQIWQRVDADRKADRLDEDDKGKDEDTLRADYRKIAERRVRLGLLLAEIGRVNGVQVGNDELIRAMRAEASRYPGQEQAVLDFFRQNPQAIDSLRGPIFEEKVVDFVLETAKVDDKFVSIEELNADEDVAGIA</sequence>
<name>TIG_GRABC</name>
<organism>
    <name type="scientific">Granulibacter bethesdensis (strain ATCC BAA-1260 / CGDNIH1)</name>
    <dbReference type="NCBI Taxonomy" id="391165"/>
    <lineage>
        <taxon>Bacteria</taxon>
        <taxon>Pseudomonadati</taxon>
        <taxon>Pseudomonadota</taxon>
        <taxon>Alphaproteobacteria</taxon>
        <taxon>Acetobacterales</taxon>
        <taxon>Acetobacteraceae</taxon>
        <taxon>Granulibacter</taxon>
    </lineage>
</organism>
<comment type="function">
    <text evidence="1">Involved in protein export. Acts as a chaperone by maintaining the newly synthesized protein in an open conformation. Functions as a peptidyl-prolyl cis-trans isomerase.</text>
</comment>
<comment type="catalytic activity">
    <reaction evidence="1">
        <text>[protein]-peptidylproline (omega=180) = [protein]-peptidylproline (omega=0)</text>
        <dbReference type="Rhea" id="RHEA:16237"/>
        <dbReference type="Rhea" id="RHEA-COMP:10747"/>
        <dbReference type="Rhea" id="RHEA-COMP:10748"/>
        <dbReference type="ChEBI" id="CHEBI:83833"/>
        <dbReference type="ChEBI" id="CHEBI:83834"/>
        <dbReference type="EC" id="5.2.1.8"/>
    </reaction>
</comment>
<comment type="subcellular location">
    <subcellularLocation>
        <location>Cytoplasm</location>
    </subcellularLocation>
    <text evidence="1">About half TF is bound to the ribosome near the polypeptide exit tunnel while the other half is free in the cytoplasm.</text>
</comment>
<comment type="domain">
    <text evidence="1">Consists of 3 domains; the N-terminus binds the ribosome, the middle domain has PPIase activity, while the C-terminus has intrinsic chaperone activity on its own.</text>
</comment>
<comment type="similarity">
    <text evidence="1">Belongs to the FKBP-type PPIase family. Tig subfamily.</text>
</comment>